<organism>
    <name type="scientific">Rhizobium leguminosarum</name>
    <dbReference type="NCBI Taxonomy" id="384"/>
    <lineage>
        <taxon>Bacteria</taxon>
        <taxon>Pseudomonadati</taxon>
        <taxon>Pseudomonadota</taxon>
        <taxon>Alphaproteobacteria</taxon>
        <taxon>Hyphomicrobiales</taxon>
        <taxon>Rhizobiaceae</taxon>
        <taxon>Rhizobium/Agrobacterium group</taxon>
        <taxon>Rhizobium</taxon>
    </lineage>
</organism>
<gene>
    <name type="primary">dctA</name>
</gene>
<accession>Q01857</accession>
<feature type="chain" id="PRO_0000202106" description="C4-dicarboxylate transport protein">
    <location>
        <begin position="1"/>
        <end position="444"/>
    </location>
</feature>
<feature type="transmembrane region" description="Helical" evidence="2">
    <location>
        <begin position="18"/>
        <end position="40"/>
    </location>
</feature>
<feature type="transmembrane region" description="Helical" evidence="2">
    <location>
        <begin position="53"/>
        <end position="75"/>
    </location>
</feature>
<feature type="transmembrane region" description="Helical" evidence="2">
    <location>
        <begin position="90"/>
        <end position="112"/>
    </location>
</feature>
<feature type="transmembrane region" description="Helical" evidence="2">
    <location>
        <begin position="142"/>
        <end position="159"/>
    </location>
</feature>
<feature type="transmembrane region" description="Helical" evidence="2">
    <location>
        <begin position="163"/>
        <end position="180"/>
    </location>
</feature>
<feature type="transmembrane region" description="Helical" evidence="2">
    <location>
        <begin position="201"/>
        <end position="222"/>
    </location>
</feature>
<feature type="transmembrane region" description="Helical" evidence="2">
    <location>
        <begin position="232"/>
        <end position="254"/>
    </location>
</feature>
<feature type="transmembrane region" description="Helical" evidence="2">
    <location>
        <begin position="327"/>
        <end position="349"/>
    </location>
</feature>
<feature type="transmembrane region" description="Helical" evidence="2">
    <location>
        <begin position="364"/>
        <end position="386"/>
    </location>
</feature>
<keyword id="KW-0997">Cell inner membrane</keyword>
<keyword id="KW-1003">Cell membrane</keyword>
<keyword id="KW-0472">Membrane</keyword>
<keyword id="KW-0769">Symport</keyword>
<keyword id="KW-0812">Transmembrane</keyword>
<keyword id="KW-1133">Transmembrane helix</keyword>
<keyword id="KW-0813">Transport</keyword>
<evidence type="ECO:0000250" key="1"/>
<evidence type="ECO:0000255" key="2"/>
<evidence type="ECO:0000305" key="3"/>
<proteinExistence type="inferred from homology"/>
<reference key="1">
    <citation type="submission" date="1991-12" db="EMBL/GenBank/DDBJ databases">
        <authorList>
            <person name="Ronson C.W."/>
        </authorList>
    </citation>
    <scope>NUCLEOTIDE SEQUENCE [GENOMIC DNA]</scope>
</reference>
<sequence>MIAAPLDAVAGSKGKKPFYSHLYVQVLVAIAAGILLGHFYPELGTQLKPLGDAFIKLVKMIIAPVIFLTVATGIAGMSDLQKVGRVAGKAMLYFLTFSTLALIIGLIVANVVQPGAGMNIDPASLDPAAVATFAAKAHEQSIVGFLTNIIPTTIVGAFADGDILQVLFFSVLFGIALAMVGEKGEQVVNFLNSLTAPVFKLVAILMKAAPIGAFGAMAFTIGKYGVGSIANLAMLIGTFYITSLLFVFIVLGAVARYNGFSIVALLRYIKEELLLVLGTSSSEAALPGLMNKMEKAGCKRSVVGLVIPTGYSFNLDGTNIYMTLAALFIAQATGIHLSWGDQILLLLVAMLSSKGAAGITGAGFITLAATLSVVPSVPVAGMALILGIDRFMSECRALTNLVGNAVATIVVARWENELDTVQLAAALGGQTGEDTSAAGLQPAE</sequence>
<comment type="function">
    <text evidence="1">Responsible for the transport of dicarboxylates such as succinate, fumarate, and malate from the periplasm across the inner membrane. This transport system plays an important role in the energy supply of rhizobium-legume symbionts (By similarity).</text>
</comment>
<comment type="subcellular location">
    <subcellularLocation>
        <location evidence="1">Cell inner membrane</location>
        <topology evidence="1">Multi-pass membrane protein</topology>
    </subcellularLocation>
</comment>
<comment type="similarity">
    <text evidence="3">Belongs to the dicarboxylate/amino acid:cation symporter (DAACS) (TC 2.A.23) family.</text>
</comment>
<name>DCTA_RHILE</name>
<protein>
    <recommendedName>
        <fullName>C4-dicarboxylate transport protein</fullName>
    </recommendedName>
</protein>
<dbReference type="EMBL" id="Z11529">
    <property type="protein sequence ID" value="CAA77618.1"/>
    <property type="molecule type" value="Genomic_DNA"/>
</dbReference>
<dbReference type="PIR" id="S27384">
    <property type="entry name" value="S27384"/>
</dbReference>
<dbReference type="RefSeq" id="WP_018242998.1">
    <property type="nucleotide sequence ID" value="NZ_CP121635.1"/>
</dbReference>
<dbReference type="SMR" id="Q01857"/>
<dbReference type="TCDB" id="2.A.23.1.3">
    <property type="family name" value="the dicarboxylate/amino acid:cation (na(+) or h(+)) symporter (daacs) family"/>
</dbReference>
<dbReference type="eggNOG" id="COG1301">
    <property type="taxonomic scope" value="Bacteria"/>
</dbReference>
<dbReference type="GO" id="GO:0005886">
    <property type="term" value="C:plasma membrane"/>
    <property type="evidence" value="ECO:0007669"/>
    <property type="project" value="UniProtKB-SubCell"/>
</dbReference>
<dbReference type="GO" id="GO:0015138">
    <property type="term" value="F:fumarate transmembrane transporter activity"/>
    <property type="evidence" value="ECO:0007669"/>
    <property type="project" value="TreeGrafter"/>
</dbReference>
<dbReference type="GO" id="GO:0015366">
    <property type="term" value="F:malate:proton symporter activity"/>
    <property type="evidence" value="ECO:0007669"/>
    <property type="project" value="TreeGrafter"/>
</dbReference>
<dbReference type="GO" id="GO:0015141">
    <property type="term" value="F:succinate transmembrane transporter activity"/>
    <property type="evidence" value="ECO:0007669"/>
    <property type="project" value="TreeGrafter"/>
</dbReference>
<dbReference type="GO" id="GO:0070778">
    <property type="term" value="P:L-aspartate transmembrane transport"/>
    <property type="evidence" value="ECO:0007669"/>
    <property type="project" value="TreeGrafter"/>
</dbReference>
<dbReference type="FunFam" id="1.10.3860.10:FF:000001">
    <property type="entry name" value="C4-dicarboxylate transport protein"/>
    <property type="match status" value="1"/>
</dbReference>
<dbReference type="Gene3D" id="1.10.3860.10">
    <property type="entry name" value="Sodium:dicarboxylate symporter"/>
    <property type="match status" value="1"/>
</dbReference>
<dbReference type="HAMAP" id="MF_01300">
    <property type="entry name" value="C4_dicarb_transport"/>
    <property type="match status" value="1"/>
</dbReference>
<dbReference type="InterPro" id="IPR023954">
    <property type="entry name" value="C4_dicarb_transport"/>
</dbReference>
<dbReference type="InterPro" id="IPR001991">
    <property type="entry name" value="Na-dicarboxylate_symporter"/>
</dbReference>
<dbReference type="InterPro" id="IPR018107">
    <property type="entry name" value="Na-dicarboxylate_symporter_CS"/>
</dbReference>
<dbReference type="InterPro" id="IPR036458">
    <property type="entry name" value="Na:dicarbo_symporter_sf"/>
</dbReference>
<dbReference type="NCBIfam" id="NF002461">
    <property type="entry name" value="PRK01663.1"/>
    <property type="match status" value="1"/>
</dbReference>
<dbReference type="NCBIfam" id="NF009587">
    <property type="entry name" value="PRK13027.1"/>
    <property type="match status" value="1"/>
</dbReference>
<dbReference type="PANTHER" id="PTHR42865:SF1">
    <property type="entry name" value="AEROBIC C4-DICARBOXYLATE TRANSPORT PROTEIN"/>
    <property type="match status" value="1"/>
</dbReference>
<dbReference type="PANTHER" id="PTHR42865">
    <property type="entry name" value="PROTON/GLUTAMATE-ASPARTATE SYMPORTER"/>
    <property type="match status" value="1"/>
</dbReference>
<dbReference type="Pfam" id="PF00375">
    <property type="entry name" value="SDF"/>
    <property type="match status" value="1"/>
</dbReference>
<dbReference type="PRINTS" id="PR00173">
    <property type="entry name" value="EDTRNSPORT"/>
</dbReference>
<dbReference type="SUPFAM" id="SSF118215">
    <property type="entry name" value="Proton glutamate symport protein"/>
    <property type="match status" value="1"/>
</dbReference>
<dbReference type="PROSITE" id="PS00713">
    <property type="entry name" value="NA_DICARBOXYL_SYMP_1"/>
    <property type="match status" value="1"/>
</dbReference>
<dbReference type="PROSITE" id="PS00714">
    <property type="entry name" value="NA_DICARBOXYL_SYMP_2"/>
    <property type="match status" value="1"/>
</dbReference>